<sequence length="335" mass="37182">MATKVVLDFEKPLVELEAKLGEMRHCLRSSSREQAPNEAEALQNEIGTLEKKVEALRQSIYKNLTRWQKVQLARHPERPYTLDYIYMITCDFVELAGDRHFSDDKAIVGGFARIEDRVSGFSQPVMVIGHQKGRDTKSNLYRNFGMAQPEGYRKALRLMKLAEKFRKPIITLIDTPGAFPGIEAEERGQAEAIARNLYEMAKLTVPVICVIIGEGASGGAIGLGVGDRILMAENSWYSVISPESCSSILWRSWNYKEQAAEALQLTAPDLLSQGIIDRIVPEPMGGAHTAPEAMAGTLKGILIEELSALLPLSSEELVNSRIEKFSSMGVWNEEG</sequence>
<gene>
    <name evidence="1" type="primary">accA</name>
    <name type="ordered locus">Cvib_1599</name>
</gene>
<dbReference type="EC" id="2.1.3.15" evidence="1"/>
<dbReference type="EMBL" id="CP000607">
    <property type="protein sequence ID" value="ABP37609.1"/>
    <property type="molecule type" value="Genomic_DNA"/>
</dbReference>
<dbReference type="SMR" id="A4SGK0"/>
<dbReference type="STRING" id="290318.Cvib_1599"/>
<dbReference type="KEGG" id="pvi:Cvib_1599"/>
<dbReference type="eggNOG" id="COG0825">
    <property type="taxonomic scope" value="Bacteria"/>
</dbReference>
<dbReference type="HOGENOM" id="CLU_015486_0_2_10"/>
<dbReference type="OrthoDB" id="9808023at2"/>
<dbReference type="UniPathway" id="UPA00655">
    <property type="reaction ID" value="UER00711"/>
</dbReference>
<dbReference type="GO" id="GO:0009317">
    <property type="term" value="C:acetyl-CoA carboxylase complex"/>
    <property type="evidence" value="ECO:0007669"/>
    <property type="project" value="InterPro"/>
</dbReference>
<dbReference type="GO" id="GO:0003989">
    <property type="term" value="F:acetyl-CoA carboxylase activity"/>
    <property type="evidence" value="ECO:0007669"/>
    <property type="project" value="InterPro"/>
</dbReference>
<dbReference type="GO" id="GO:0005524">
    <property type="term" value="F:ATP binding"/>
    <property type="evidence" value="ECO:0007669"/>
    <property type="project" value="UniProtKB-KW"/>
</dbReference>
<dbReference type="GO" id="GO:0016743">
    <property type="term" value="F:carboxyl- or carbamoyltransferase activity"/>
    <property type="evidence" value="ECO:0007669"/>
    <property type="project" value="UniProtKB-UniRule"/>
</dbReference>
<dbReference type="GO" id="GO:0006633">
    <property type="term" value="P:fatty acid biosynthetic process"/>
    <property type="evidence" value="ECO:0007669"/>
    <property type="project" value="UniProtKB-KW"/>
</dbReference>
<dbReference type="GO" id="GO:2001295">
    <property type="term" value="P:malonyl-CoA biosynthetic process"/>
    <property type="evidence" value="ECO:0007669"/>
    <property type="project" value="UniProtKB-UniRule"/>
</dbReference>
<dbReference type="Gene3D" id="3.90.226.10">
    <property type="entry name" value="2-enoyl-CoA Hydratase, Chain A, domain 1"/>
    <property type="match status" value="1"/>
</dbReference>
<dbReference type="HAMAP" id="MF_00823">
    <property type="entry name" value="AcetylCoA_CT_alpha"/>
    <property type="match status" value="1"/>
</dbReference>
<dbReference type="InterPro" id="IPR001095">
    <property type="entry name" value="Acetyl_CoA_COase_a_su"/>
</dbReference>
<dbReference type="InterPro" id="IPR029045">
    <property type="entry name" value="ClpP/crotonase-like_dom_sf"/>
</dbReference>
<dbReference type="InterPro" id="IPR011763">
    <property type="entry name" value="COA_CT_C"/>
</dbReference>
<dbReference type="NCBIfam" id="TIGR00513">
    <property type="entry name" value="accA"/>
    <property type="match status" value="1"/>
</dbReference>
<dbReference type="NCBIfam" id="NF041504">
    <property type="entry name" value="AccA_sub"/>
    <property type="match status" value="1"/>
</dbReference>
<dbReference type="NCBIfam" id="NF004344">
    <property type="entry name" value="PRK05724.1"/>
    <property type="match status" value="1"/>
</dbReference>
<dbReference type="PANTHER" id="PTHR42853">
    <property type="entry name" value="ACETYL-COENZYME A CARBOXYLASE CARBOXYL TRANSFERASE SUBUNIT ALPHA"/>
    <property type="match status" value="1"/>
</dbReference>
<dbReference type="PANTHER" id="PTHR42853:SF3">
    <property type="entry name" value="ACETYL-COENZYME A CARBOXYLASE CARBOXYL TRANSFERASE SUBUNIT ALPHA, CHLOROPLASTIC"/>
    <property type="match status" value="1"/>
</dbReference>
<dbReference type="Pfam" id="PF03255">
    <property type="entry name" value="ACCA"/>
    <property type="match status" value="1"/>
</dbReference>
<dbReference type="PRINTS" id="PR01069">
    <property type="entry name" value="ACCCTRFRASEA"/>
</dbReference>
<dbReference type="SUPFAM" id="SSF52096">
    <property type="entry name" value="ClpP/crotonase"/>
    <property type="match status" value="1"/>
</dbReference>
<dbReference type="PROSITE" id="PS50989">
    <property type="entry name" value="COA_CT_CTER"/>
    <property type="match status" value="1"/>
</dbReference>
<feature type="chain" id="PRO_1000083933" description="Acetyl-coenzyme A carboxylase carboxyl transferase subunit alpha">
    <location>
        <begin position="1"/>
        <end position="335"/>
    </location>
</feature>
<feature type="domain" description="CoA carboxyltransferase C-terminal" evidence="2">
    <location>
        <begin position="48"/>
        <end position="308"/>
    </location>
</feature>
<proteinExistence type="inferred from homology"/>
<organism>
    <name type="scientific">Chlorobium phaeovibrioides (strain DSM 265 / 1930)</name>
    <name type="common">Prosthecochloris vibrioformis (strain DSM 265)</name>
    <dbReference type="NCBI Taxonomy" id="290318"/>
    <lineage>
        <taxon>Bacteria</taxon>
        <taxon>Pseudomonadati</taxon>
        <taxon>Chlorobiota</taxon>
        <taxon>Chlorobiia</taxon>
        <taxon>Chlorobiales</taxon>
        <taxon>Chlorobiaceae</taxon>
        <taxon>Chlorobium/Pelodictyon group</taxon>
        <taxon>Chlorobium</taxon>
    </lineage>
</organism>
<reference key="1">
    <citation type="submission" date="2007-03" db="EMBL/GenBank/DDBJ databases">
        <title>Complete sequence of Prosthecochloris vibrioformis DSM 265.</title>
        <authorList>
            <consortium name="US DOE Joint Genome Institute"/>
            <person name="Copeland A."/>
            <person name="Lucas S."/>
            <person name="Lapidus A."/>
            <person name="Barry K."/>
            <person name="Detter J.C."/>
            <person name="Glavina del Rio T."/>
            <person name="Hammon N."/>
            <person name="Israni S."/>
            <person name="Pitluck S."/>
            <person name="Schmutz J."/>
            <person name="Larimer F."/>
            <person name="Land M."/>
            <person name="Hauser L."/>
            <person name="Mikhailova N."/>
            <person name="Li T."/>
            <person name="Overmann J."/>
            <person name="Schuster S.C."/>
            <person name="Bryant D.A."/>
            <person name="Richardson P."/>
        </authorList>
    </citation>
    <scope>NUCLEOTIDE SEQUENCE [LARGE SCALE GENOMIC DNA]</scope>
    <source>
        <strain>DSM 265 / 1930</strain>
    </source>
</reference>
<name>ACCA_CHLPM</name>
<protein>
    <recommendedName>
        <fullName evidence="1">Acetyl-coenzyme A carboxylase carboxyl transferase subunit alpha</fullName>
        <shortName evidence="1">ACCase subunit alpha</shortName>
        <shortName evidence="1">Acetyl-CoA carboxylase carboxyltransferase subunit alpha</shortName>
        <ecNumber evidence="1">2.1.3.15</ecNumber>
    </recommendedName>
</protein>
<evidence type="ECO:0000255" key="1">
    <source>
        <dbReference type="HAMAP-Rule" id="MF_00823"/>
    </source>
</evidence>
<evidence type="ECO:0000255" key="2">
    <source>
        <dbReference type="PROSITE-ProRule" id="PRU01137"/>
    </source>
</evidence>
<keyword id="KW-0067">ATP-binding</keyword>
<keyword id="KW-0963">Cytoplasm</keyword>
<keyword id="KW-0275">Fatty acid biosynthesis</keyword>
<keyword id="KW-0276">Fatty acid metabolism</keyword>
<keyword id="KW-0444">Lipid biosynthesis</keyword>
<keyword id="KW-0443">Lipid metabolism</keyword>
<keyword id="KW-0547">Nucleotide-binding</keyword>
<keyword id="KW-0808">Transferase</keyword>
<accession>A4SGK0</accession>
<comment type="function">
    <text evidence="1">Component of the acetyl coenzyme A carboxylase (ACC) complex. First, biotin carboxylase catalyzes the carboxylation of biotin on its carrier protein (BCCP) and then the CO(2) group is transferred by the carboxyltransferase to acetyl-CoA to form malonyl-CoA.</text>
</comment>
<comment type="catalytic activity">
    <reaction evidence="1">
        <text>N(6)-carboxybiotinyl-L-lysyl-[protein] + acetyl-CoA = N(6)-biotinyl-L-lysyl-[protein] + malonyl-CoA</text>
        <dbReference type="Rhea" id="RHEA:54728"/>
        <dbReference type="Rhea" id="RHEA-COMP:10505"/>
        <dbReference type="Rhea" id="RHEA-COMP:10506"/>
        <dbReference type="ChEBI" id="CHEBI:57288"/>
        <dbReference type="ChEBI" id="CHEBI:57384"/>
        <dbReference type="ChEBI" id="CHEBI:83144"/>
        <dbReference type="ChEBI" id="CHEBI:83145"/>
        <dbReference type="EC" id="2.1.3.15"/>
    </reaction>
</comment>
<comment type="pathway">
    <text evidence="1">Lipid metabolism; malonyl-CoA biosynthesis; malonyl-CoA from acetyl-CoA: step 1/1.</text>
</comment>
<comment type="subunit">
    <text evidence="1">Acetyl-CoA carboxylase is a heterohexamer composed of biotin carboxyl carrier protein (AccB), biotin carboxylase (AccC) and two subunits each of ACCase subunit alpha (AccA) and ACCase subunit beta (AccD).</text>
</comment>
<comment type="subcellular location">
    <subcellularLocation>
        <location evidence="1">Cytoplasm</location>
    </subcellularLocation>
</comment>
<comment type="similarity">
    <text evidence="1">Belongs to the AccA family.</text>
</comment>